<gene>
    <name evidence="1" type="primary">xerC</name>
    <name type="ordered locus">Mmcs_1990</name>
</gene>
<proteinExistence type="inferred from homology"/>
<feature type="chain" id="PRO_1000070016" description="Tyrosine recombinase XerC">
    <location>
        <begin position="1"/>
        <end position="300"/>
    </location>
</feature>
<feature type="domain" description="Core-binding (CB)" evidence="3">
    <location>
        <begin position="1"/>
        <end position="86"/>
    </location>
</feature>
<feature type="domain" description="Tyr recombinase" evidence="2">
    <location>
        <begin position="107"/>
        <end position="294"/>
    </location>
</feature>
<feature type="active site" evidence="1">
    <location>
        <position position="151"/>
    </location>
</feature>
<feature type="active site" evidence="1">
    <location>
        <position position="175"/>
    </location>
</feature>
<feature type="active site" evidence="1">
    <location>
        <position position="246"/>
    </location>
</feature>
<feature type="active site" evidence="1">
    <location>
        <position position="249"/>
    </location>
</feature>
<feature type="active site" evidence="1">
    <location>
        <position position="272"/>
    </location>
</feature>
<feature type="active site" description="O-(3'-phospho-DNA)-tyrosine intermediate" evidence="1">
    <location>
        <position position="281"/>
    </location>
</feature>
<sequence length="300" mass="32429">MESVLDAFDQYLALERGRSDHTRRAYLGDLRSLFAFCNERTPGADLGSLTLPVLRAWLSAQAAAGTARTTLARRTSAVKTFTAWAVRRGLMASDPATRLQMPKARRTLPAVLRQDQARDALDAANSGAQQGDPLALRDRLIVEMLYATGIRVSELCGLDIDDVDTSRRLLRVLGKGDKQRTVPFGEPAEQALRAWLTSGRPALATAESGPALLLGARGRRLDPRQARTVVHETVGAVAGAPDIGPHGLRHSAATHLLEGGADLRIVQELLGHSTLATTQLYTHVTVARLRAVHDQAHPRA</sequence>
<evidence type="ECO:0000255" key="1">
    <source>
        <dbReference type="HAMAP-Rule" id="MF_01808"/>
    </source>
</evidence>
<evidence type="ECO:0000255" key="2">
    <source>
        <dbReference type="PROSITE-ProRule" id="PRU01246"/>
    </source>
</evidence>
<evidence type="ECO:0000255" key="3">
    <source>
        <dbReference type="PROSITE-ProRule" id="PRU01248"/>
    </source>
</evidence>
<keyword id="KW-0131">Cell cycle</keyword>
<keyword id="KW-0132">Cell division</keyword>
<keyword id="KW-0159">Chromosome partition</keyword>
<keyword id="KW-0963">Cytoplasm</keyword>
<keyword id="KW-0229">DNA integration</keyword>
<keyword id="KW-0233">DNA recombination</keyword>
<keyword id="KW-0238">DNA-binding</keyword>
<reference key="1">
    <citation type="submission" date="2006-06" db="EMBL/GenBank/DDBJ databases">
        <title>Complete sequence of chromosome of Mycobacterium sp. MCS.</title>
        <authorList>
            <consortium name="US DOE Joint Genome Institute"/>
            <person name="Copeland A."/>
            <person name="Lucas S."/>
            <person name="Lapidus A."/>
            <person name="Barry K."/>
            <person name="Detter J.C."/>
            <person name="Glavina del Rio T."/>
            <person name="Hammon N."/>
            <person name="Israni S."/>
            <person name="Dalin E."/>
            <person name="Tice H."/>
            <person name="Pitluck S."/>
            <person name="Martinez M."/>
            <person name="Schmutz J."/>
            <person name="Larimer F."/>
            <person name="Land M."/>
            <person name="Hauser L."/>
            <person name="Kyrpides N."/>
            <person name="Kim E."/>
            <person name="Miller C.D."/>
            <person name="Hughes J.E."/>
            <person name="Anderson A.J."/>
            <person name="Sims R.C."/>
            <person name="Richardson P."/>
        </authorList>
    </citation>
    <scope>NUCLEOTIDE SEQUENCE [LARGE SCALE GENOMIC DNA]</scope>
    <source>
        <strain>MCS</strain>
    </source>
</reference>
<comment type="function">
    <text evidence="1">Site-specific tyrosine recombinase, which acts by catalyzing the cutting and rejoining of the recombining DNA molecules. The XerC-XerD complex is essential to convert dimers of the bacterial chromosome into monomers to permit their segregation at cell division. It also contributes to the segregational stability of plasmids.</text>
</comment>
<comment type="subunit">
    <text evidence="1">Forms a cyclic heterotetrameric complex composed of two molecules of XerC and two molecules of XerD.</text>
</comment>
<comment type="subcellular location">
    <subcellularLocation>
        <location evidence="1">Cytoplasm</location>
    </subcellularLocation>
</comment>
<comment type="similarity">
    <text evidence="1">Belongs to the 'phage' integrase family. XerC subfamily.</text>
</comment>
<dbReference type="EMBL" id="CP000384">
    <property type="protein sequence ID" value="ABG08099.1"/>
    <property type="molecule type" value="Genomic_DNA"/>
</dbReference>
<dbReference type="SMR" id="Q1BAI5"/>
<dbReference type="KEGG" id="mmc:Mmcs_1990"/>
<dbReference type="HOGENOM" id="CLU_027562_9_0_11"/>
<dbReference type="BioCyc" id="MSP164756:G1G6O-2035-MONOMER"/>
<dbReference type="GO" id="GO:0005737">
    <property type="term" value="C:cytoplasm"/>
    <property type="evidence" value="ECO:0007669"/>
    <property type="project" value="UniProtKB-SubCell"/>
</dbReference>
<dbReference type="GO" id="GO:0003677">
    <property type="term" value="F:DNA binding"/>
    <property type="evidence" value="ECO:0007669"/>
    <property type="project" value="UniProtKB-KW"/>
</dbReference>
<dbReference type="GO" id="GO:0009037">
    <property type="term" value="F:tyrosine-based site-specific recombinase activity"/>
    <property type="evidence" value="ECO:0007669"/>
    <property type="project" value="UniProtKB-UniRule"/>
</dbReference>
<dbReference type="GO" id="GO:0051301">
    <property type="term" value="P:cell division"/>
    <property type="evidence" value="ECO:0007669"/>
    <property type="project" value="UniProtKB-KW"/>
</dbReference>
<dbReference type="GO" id="GO:0007059">
    <property type="term" value="P:chromosome segregation"/>
    <property type="evidence" value="ECO:0007669"/>
    <property type="project" value="UniProtKB-UniRule"/>
</dbReference>
<dbReference type="GO" id="GO:0006313">
    <property type="term" value="P:DNA transposition"/>
    <property type="evidence" value="ECO:0007669"/>
    <property type="project" value="UniProtKB-UniRule"/>
</dbReference>
<dbReference type="CDD" id="cd00798">
    <property type="entry name" value="INT_XerDC_C"/>
    <property type="match status" value="1"/>
</dbReference>
<dbReference type="Gene3D" id="1.10.150.130">
    <property type="match status" value="1"/>
</dbReference>
<dbReference type="Gene3D" id="1.10.443.10">
    <property type="entry name" value="Intergrase catalytic core"/>
    <property type="match status" value="1"/>
</dbReference>
<dbReference type="HAMAP" id="MF_01808">
    <property type="entry name" value="Recomb_XerC_XerD"/>
    <property type="match status" value="1"/>
</dbReference>
<dbReference type="InterPro" id="IPR044068">
    <property type="entry name" value="CB"/>
</dbReference>
<dbReference type="InterPro" id="IPR011010">
    <property type="entry name" value="DNA_brk_join_enz"/>
</dbReference>
<dbReference type="InterPro" id="IPR013762">
    <property type="entry name" value="Integrase-like_cat_sf"/>
</dbReference>
<dbReference type="InterPro" id="IPR002104">
    <property type="entry name" value="Integrase_catalytic"/>
</dbReference>
<dbReference type="InterPro" id="IPR010998">
    <property type="entry name" value="Integrase_recombinase_N"/>
</dbReference>
<dbReference type="InterPro" id="IPR004107">
    <property type="entry name" value="Integrase_SAM-like_N"/>
</dbReference>
<dbReference type="InterPro" id="IPR023009">
    <property type="entry name" value="Tyrosine_recombinase_XerC/XerD"/>
</dbReference>
<dbReference type="InterPro" id="IPR050090">
    <property type="entry name" value="Tyrosine_recombinase_XerCD"/>
</dbReference>
<dbReference type="NCBIfam" id="NF001399">
    <property type="entry name" value="PRK00283.1"/>
    <property type="match status" value="1"/>
</dbReference>
<dbReference type="PANTHER" id="PTHR30349">
    <property type="entry name" value="PHAGE INTEGRASE-RELATED"/>
    <property type="match status" value="1"/>
</dbReference>
<dbReference type="PANTHER" id="PTHR30349:SF77">
    <property type="entry name" value="TYROSINE RECOMBINASE XERC"/>
    <property type="match status" value="1"/>
</dbReference>
<dbReference type="Pfam" id="PF02899">
    <property type="entry name" value="Phage_int_SAM_1"/>
    <property type="match status" value="1"/>
</dbReference>
<dbReference type="Pfam" id="PF00589">
    <property type="entry name" value="Phage_integrase"/>
    <property type="match status" value="1"/>
</dbReference>
<dbReference type="SUPFAM" id="SSF56349">
    <property type="entry name" value="DNA breaking-rejoining enzymes"/>
    <property type="match status" value="1"/>
</dbReference>
<dbReference type="PROSITE" id="PS51900">
    <property type="entry name" value="CB"/>
    <property type="match status" value="1"/>
</dbReference>
<dbReference type="PROSITE" id="PS51898">
    <property type="entry name" value="TYR_RECOMBINASE"/>
    <property type="match status" value="1"/>
</dbReference>
<name>XERC_MYCSS</name>
<accession>Q1BAI5</accession>
<protein>
    <recommendedName>
        <fullName evidence="1">Tyrosine recombinase XerC</fullName>
    </recommendedName>
</protein>
<organism>
    <name type="scientific">Mycobacterium sp. (strain MCS)</name>
    <dbReference type="NCBI Taxonomy" id="164756"/>
    <lineage>
        <taxon>Bacteria</taxon>
        <taxon>Bacillati</taxon>
        <taxon>Actinomycetota</taxon>
        <taxon>Actinomycetes</taxon>
        <taxon>Mycobacteriales</taxon>
        <taxon>Mycobacteriaceae</taxon>
        <taxon>Mycobacterium</taxon>
    </lineage>
</organism>